<protein>
    <recommendedName>
        <fullName>Glyceraldehyde-3-phosphate dehydrogenase</fullName>
        <shortName>GAPDH</shortName>
        <ecNumber evidence="1">1.2.1.12</ecNumber>
    </recommendedName>
    <alternativeName>
        <fullName evidence="7">Peptidyl-cysteine S-nitrosylase GAPDH</fullName>
        <ecNumber evidence="2">2.6.99.-</ecNumber>
    </alternativeName>
</protein>
<organism>
    <name type="scientific">Canis lupus familiaris</name>
    <name type="common">Dog</name>
    <name type="synonym">Canis familiaris</name>
    <dbReference type="NCBI Taxonomy" id="9615"/>
    <lineage>
        <taxon>Eukaryota</taxon>
        <taxon>Metazoa</taxon>
        <taxon>Chordata</taxon>
        <taxon>Craniata</taxon>
        <taxon>Vertebrata</taxon>
        <taxon>Euteleostomi</taxon>
        <taxon>Mammalia</taxon>
        <taxon>Eutheria</taxon>
        <taxon>Laurasiatheria</taxon>
        <taxon>Carnivora</taxon>
        <taxon>Caniformia</taxon>
        <taxon>Canidae</taxon>
        <taxon>Canis</taxon>
    </lineage>
</organism>
<sequence length="333" mass="35861">MVKVGVNGFGRIGRLVTRAAFNSGKVDIVAINDPFIDLNYMVYMFQYDSTHGKFHGTVKAENGKLVINGKSISIFQERDPANIKWGDAGAEYVVESTGVFTTMEKAGAHLKGGAKRVIISAPSADAPMFVMGVNHEKYDNSLKIVSNASCTTNCLAPLAKVIHDHFGIVEGLMTTVHAITATQKTVDGPSGKMWRDGRGAAQNIIPASTGAAKAVGKVIPELNGKLTGMAFRVPTPNVSVVDLTCRLEKAAKYDDIKKVVKQASEGPLKGILGYTEDQVVSCDFNSDTHSSTFDAGAGIALNDHFVKLISWYDNEFGYSNRVVDLMVYMASKE</sequence>
<keyword id="KW-0007">Acetylation</keyword>
<keyword id="KW-0013">ADP-ribosylation</keyword>
<keyword id="KW-0053">Apoptosis</keyword>
<keyword id="KW-0963">Cytoplasm</keyword>
<keyword id="KW-0206">Cytoskeleton</keyword>
<keyword id="KW-0324">Glycolysis</keyword>
<keyword id="KW-0391">Immunity</keyword>
<keyword id="KW-0399">Innate immunity</keyword>
<keyword id="KW-1017">Isopeptide bond</keyword>
<keyword id="KW-0488">Methylation</keyword>
<keyword id="KW-0520">NAD</keyword>
<keyword id="KW-0539">Nucleus</keyword>
<keyword id="KW-0560">Oxidoreductase</keyword>
<keyword id="KW-0597">Phosphoprotein</keyword>
<keyword id="KW-1185">Reference proteome</keyword>
<keyword id="KW-0702">S-nitrosylation</keyword>
<keyword id="KW-0808">Transferase</keyword>
<keyword id="KW-0810">Translation regulation</keyword>
<keyword id="KW-0832">Ubl conjugation</keyword>
<dbReference type="EC" id="1.2.1.12" evidence="1"/>
<dbReference type="EC" id="2.6.99.-" evidence="2"/>
<dbReference type="EMBL" id="AB038240">
    <property type="protein sequence ID" value="BAA90817.1"/>
    <property type="molecule type" value="mRNA"/>
</dbReference>
<dbReference type="EMBL" id="U31247">
    <property type="protein sequence ID" value="AAB18944.1"/>
    <property type="molecule type" value="mRNA"/>
</dbReference>
<dbReference type="SMR" id="Q28259"/>
<dbReference type="FunCoup" id="Q28259">
    <property type="interactions" value="540"/>
</dbReference>
<dbReference type="IntAct" id="Q28259">
    <property type="interactions" value="1"/>
</dbReference>
<dbReference type="STRING" id="9615.ENSCAFP00000022224"/>
<dbReference type="PaxDb" id="9612-ENSCAFP00000022224"/>
<dbReference type="eggNOG" id="KOG0657">
    <property type="taxonomic scope" value="Eukaryota"/>
</dbReference>
<dbReference type="InParanoid" id="Q28259"/>
<dbReference type="OrthoDB" id="9669797at2759"/>
<dbReference type="UniPathway" id="UPA00109">
    <property type="reaction ID" value="UER00184"/>
</dbReference>
<dbReference type="Proteomes" id="UP000002254">
    <property type="component" value="Unplaced"/>
</dbReference>
<dbReference type="Proteomes" id="UP000694429">
    <property type="component" value="Unplaced"/>
</dbReference>
<dbReference type="Proteomes" id="UP000694542">
    <property type="component" value="Unplaced"/>
</dbReference>
<dbReference type="Proteomes" id="UP000805418">
    <property type="component" value="Unplaced"/>
</dbReference>
<dbReference type="GO" id="GO:0005737">
    <property type="term" value="C:cytoplasm"/>
    <property type="evidence" value="ECO:0000250"/>
    <property type="project" value="UniProtKB"/>
</dbReference>
<dbReference type="GO" id="GO:0005829">
    <property type="term" value="C:cytosol"/>
    <property type="evidence" value="ECO:0000250"/>
    <property type="project" value="UniProtKB"/>
</dbReference>
<dbReference type="GO" id="GO:0097452">
    <property type="term" value="C:GAIT complex"/>
    <property type="evidence" value="ECO:0000250"/>
    <property type="project" value="UniProtKB"/>
</dbReference>
<dbReference type="GO" id="GO:0015630">
    <property type="term" value="C:microtubule cytoskeleton"/>
    <property type="evidence" value="ECO:0000250"/>
    <property type="project" value="UniProtKB"/>
</dbReference>
<dbReference type="GO" id="GO:0005634">
    <property type="term" value="C:nucleus"/>
    <property type="evidence" value="ECO:0000250"/>
    <property type="project" value="UniProtKB"/>
</dbReference>
<dbReference type="GO" id="GO:0004365">
    <property type="term" value="F:glyceraldehyde-3-phosphate dehydrogenase (NAD+) (phosphorylating) activity"/>
    <property type="evidence" value="ECO:0000250"/>
    <property type="project" value="UniProtKB"/>
</dbReference>
<dbReference type="GO" id="GO:0008017">
    <property type="term" value="F:microtubule binding"/>
    <property type="evidence" value="ECO:0000250"/>
    <property type="project" value="UniProtKB"/>
</dbReference>
<dbReference type="GO" id="GO:0051287">
    <property type="term" value="F:NAD binding"/>
    <property type="evidence" value="ECO:0007669"/>
    <property type="project" value="InterPro"/>
</dbReference>
<dbReference type="GO" id="GO:0050661">
    <property type="term" value="F:NADP binding"/>
    <property type="evidence" value="ECO:0007669"/>
    <property type="project" value="InterPro"/>
</dbReference>
<dbReference type="GO" id="GO:0035605">
    <property type="term" value="F:peptidyl-cysteine S-nitrosylase activity"/>
    <property type="evidence" value="ECO:0000250"/>
    <property type="project" value="UniProtKB"/>
</dbReference>
<dbReference type="GO" id="GO:0006006">
    <property type="term" value="P:glucose metabolic process"/>
    <property type="evidence" value="ECO:0007669"/>
    <property type="project" value="InterPro"/>
</dbReference>
<dbReference type="GO" id="GO:0006096">
    <property type="term" value="P:glycolytic process"/>
    <property type="evidence" value="ECO:0000318"/>
    <property type="project" value="GO_Central"/>
</dbReference>
<dbReference type="GO" id="GO:0045087">
    <property type="term" value="P:innate immune response"/>
    <property type="evidence" value="ECO:0007669"/>
    <property type="project" value="UniProtKB-KW"/>
</dbReference>
<dbReference type="GO" id="GO:0000226">
    <property type="term" value="P:microtubule cytoskeleton organization"/>
    <property type="evidence" value="ECO:0000250"/>
    <property type="project" value="UniProtKB"/>
</dbReference>
<dbReference type="GO" id="GO:0051402">
    <property type="term" value="P:neuron apoptotic process"/>
    <property type="evidence" value="ECO:0000250"/>
    <property type="project" value="UniProtKB"/>
</dbReference>
<dbReference type="GO" id="GO:0035606">
    <property type="term" value="P:peptidyl-cysteine S-trans-nitrosylation"/>
    <property type="evidence" value="ECO:0000250"/>
    <property type="project" value="UniProtKB"/>
</dbReference>
<dbReference type="GO" id="GO:0043123">
    <property type="term" value="P:positive regulation of canonical NF-kappaB signal transduction"/>
    <property type="evidence" value="ECO:0000250"/>
    <property type="project" value="UniProtKB"/>
</dbReference>
<dbReference type="GO" id="GO:0032481">
    <property type="term" value="P:positive regulation of type I interferon production"/>
    <property type="evidence" value="ECO:0000250"/>
    <property type="project" value="UniProtKB"/>
</dbReference>
<dbReference type="GO" id="GO:0050821">
    <property type="term" value="P:protein stabilization"/>
    <property type="evidence" value="ECO:0000250"/>
    <property type="project" value="UniProtKB"/>
</dbReference>
<dbReference type="GO" id="GO:0006417">
    <property type="term" value="P:regulation of translation"/>
    <property type="evidence" value="ECO:0007669"/>
    <property type="project" value="UniProtKB-KW"/>
</dbReference>
<dbReference type="CDD" id="cd18126">
    <property type="entry name" value="GAPDH_I_C"/>
    <property type="match status" value="1"/>
</dbReference>
<dbReference type="CDD" id="cd05214">
    <property type="entry name" value="GAPDH_I_N"/>
    <property type="match status" value="1"/>
</dbReference>
<dbReference type="FunFam" id="3.30.360.10:FF:000001">
    <property type="entry name" value="Glyceraldehyde-3-phosphate dehydrogenase"/>
    <property type="match status" value="1"/>
</dbReference>
<dbReference type="FunFam" id="3.40.50.720:FF:001161">
    <property type="entry name" value="Glyceraldehyde-3-phosphate dehydrogenase"/>
    <property type="match status" value="1"/>
</dbReference>
<dbReference type="FunFam" id="3.40.50.720:FF:000636">
    <property type="entry name" value="Glyceraldehyde-3-phosphate dehydrogenase 2, cytosolic"/>
    <property type="match status" value="1"/>
</dbReference>
<dbReference type="Gene3D" id="3.30.360.10">
    <property type="entry name" value="Dihydrodipicolinate Reductase, domain 2"/>
    <property type="match status" value="1"/>
</dbReference>
<dbReference type="Gene3D" id="3.40.50.720">
    <property type="entry name" value="NAD(P)-binding Rossmann-like Domain"/>
    <property type="match status" value="1"/>
</dbReference>
<dbReference type="InterPro" id="IPR020831">
    <property type="entry name" value="GlycerAld/Erythrose_P_DH"/>
</dbReference>
<dbReference type="InterPro" id="IPR020830">
    <property type="entry name" value="GlycerAld_3-P_DH_AS"/>
</dbReference>
<dbReference type="InterPro" id="IPR020829">
    <property type="entry name" value="GlycerAld_3-P_DH_cat"/>
</dbReference>
<dbReference type="InterPro" id="IPR020828">
    <property type="entry name" value="GlycerAld_3-P_DH_NAD(P)-bd"/>
</dbReference>
<dbReference type="InterPro" id="IPR006424">
    <property type="entry name" value="Glyceraldehyde-3-P_DH_1"/>
</dbReference>
<dbReference type="InterPro" id="IPR036291">
    <property type="entry name" value="NAD(P)-bd_dom_sf"/>
</dbReference>
<dbReference type="NCBIfam" id="TIGR01534">
    <property type="entry name" value="GAPDH-I"/>
    <property type="match status" value="1"/>
</dbReference>
<dbReference type="PANTHER" id="PTHR10836">
    <property type="entry name" value="GLYCERALDEHYDE 3-PHOSPHATE DEHYDROGENASE"/>
    <property type="match status" value="1"/>
</dbReference>
<dbReference type="PANTHER" id="PTHR10836:SF111">
    <property type="entry name" value="GLYCERALDEHYDE-3-PHOSPHATE DEHYDROGENASE"/>
    <property type="match status" value="1"/>
</dbReference>
<dbReference type="Pfam" id="PF02800">
    <property type="entry name" value="Gp_dh_C"/>
    <property type="match status" value="1"/>
</dbReference>
<dbReference type="Pfam" id="PF00044">
    <property type="entry name" value="Gp_dh_N"/>
    <property type="match status" value="1"/>
</dbReference>
<dbReference type="PIRSF" id="PIRSF000149">
    <property type="entry name" value="GAP_DH"/>
    <property type="match status" value="1"/>
</dbReference>
<dbReference type="PRINTS" id="PR00078">
    <property type="entry name" value="G3PDHDRGNASE"/>
</dbReference>
<dbReference type="SMART" id="SM00846">
    <property type="entry name" value="Gp_dh_N"/>
    <property type="match status" value="1"/>
</dbReference>
<dbReference type="SUPFAM" id="SSF55347">
    <property type="entry name" value="Glyceraldehyde-3-phosphate dehydrogenase-like, C-terminal domain"/>
    <property type="match status" value="1"/>
</dbReference>
<dbReference type="SUPFAM" id="SSF51735">
    <property type="entry name" value="NAD(P)-binding Rossmann-fold domains"/>
    <property type="match status" value="1"/>
</dbReference>
<dbReference type="PROSITE" id="PS00071">
    <property type="entry name" value="GAPDH"/>
    <property type="match status" value="1"/>
</dbReference>
<accession>Q28259</accession>
<accession>Q9N2D6</accession>
<feature type="chain" id="PRO_0000145482" description="Glyceraldehyde-3-phosphate dehydrogenase">
    <location>
        <begin position="1"/>
        <end position="333"/>
    </location>
</feature>
<feature type="region of interest" description="Interaction with WARS1" evidence="1">
    <location>
        <begin position="1"/>
        <end position="146"/>
    </location>
</feature>
<feature type="short sequence motif" description="[IL]-x-C-x-x-[DE] motif" evidence="1">
    <location>
        <begin position="243"/>
        <end position="248"/>
    </location>
</feature>
<feature type="active site" description="Nucleophile" evidence="6">
    <location>
        <position position="150"/>
    </location>
</feature>
<feature type="binding site" evidence="1">
    <location>
        <begin position="11"/>
        <end position="12"/>
    </location>
    <ligand>
        <name>NAD(+)</name>
        <dbReference type="ChEBI" id="CHEBI:57540"/>
    </ligand>
</feature>
<feature type="binding site" evidence="1">
    <location>
        <position position="33"/>
    </location>
    <ligand>
        <name>NAD(+)</name>
        <dbReference type="ChEBI" id="CHEBI:57540"/>
    </ligand>
</feature>
<feature type="binding site" evidence="1">
    <location>
        <position position="78"/>
    </location>
    <ligand>
        <name>NAD(+)</name>
        <dbReference type="ChEBI" id="CHEBI:57540"/>
    </ligand>
</feature>
<feature type="binding site" evidence="1">
    <location>
        <position position="120"/>
    </location>
    <ligand>
        <name>NAD(+)</name>
        <dbReference type="ChEBI" id="CHEBI:57540"/>
    </ligand>
</feature>
<feature type="binding site" evidence="5">
    <location>
        <begin position="149"/>
        <end position="151"/>
    </location>
    <ligand>
        <name>D-glyceraldehyde 3-phosphate</name>
        <dbReference type="ChEBI" id="CHEBI:59776"/>
    </ligand>
</feature>
<feature type="binding site" evidence="5">
    <location>
        <position position="180"/>
    </location>
    <ligand>
        <name>D-glyceraldehyde 3-phosphate</name>
        <dbReference type="ChEBI" id="CHEBI:59776"/>
    </ligand>
</feature>
<feature type="binding site" evidence="5">
    <location>
        <begin position="209"/>
        <end position="210"/>
    </location>
    <ligand>
        <name>D-glyceraldehyde 3-phosphate</name>
        <dbReference type="ChEBI" id="CHEBI:59776"/>
    </ligand>
</feature>
<feature type="binding site" evidence="5">
    <location>
        <position position="232"/>
    </location>
    <ligand>
        <name>D-glyceraldehyde 3-phosphate</name>
        <dbReference type="ChEBI" id="CHEBI:59776"/>
    </ligand>
</feature>
<feature type="binding site" evidence="1">
    <location>
        <position position="314"/>
    </location>
    <ligand>
        <name>NAD(+)</name>
        <dbReference type="ChEBI" id="CHEBI:57540"/>
    </ligand>
</feature>
<feature type="site" description="Activates thiol group during catalysis" evidence="1">
    <location>
        <position position="177"/>
    </location>
</feature>
<feature type="modified residue" description="N6,N6-dimethyllysine" evidence="1">
    <location>
        <position position="3"/>
    </location>
</feature>
<feature type="modified residue" description="Deamidated asparagine" evidence="1">
    <location>
        <position position="7"/>
    </location>
</feature>
<feature type="modified residue" description="Phosphotyrosine" evidence="1">
    <location>
        <position position="40"/>
    </location>
</feature>
<feature type="modified residue" description="N6-acetyllysine" evidence="1">
    <location>
        <position position="59"/>
    </location>
</feature>
<feature type="modified residue" description="Deamidated asparagine" evidence="1">
    <location>
        <position position="62"/>
    </location>
</feature>
<feature type="modified residue" description="N6,N6-dimethyllysine" evidence="1">
    <location>
        <position position="64"/>
    </location>
</feature>
<feature type="modified residue" description="Deamidated asparagine" evidence="1">
    <location>
        <position position="68"/>
    </location>
</feature>
<feature type="modified residue" description="Phosphoserine" evidence="1">
    <location>
        <position position="120"/>
    </location>
</feature>
<feature type="modified residue" description="Phosphoserine" evidence="1">
    <location>
        <position position="146"/>
    </location>
</feature>
<feature type="modified residue" description="Deamidated asparagine" evidence="1">
    <location>
        <position position="147"/>
    </location>
</feature>
<feature type="modified residue" description="Phosphoserine" evidence="1">
    <location>
        <position position="149"/>
    </location>
</feature>
<feature type="modified residue" description="ADP-ribosylcysteine; by autocatalysis; in irreversibly inhibited form" evidence="2">
    <location>
        <position position="150"/>
    </location>
</feature>
<feature type="modified residue" description="Cysteine persulfide" evidence="4">
    <location>
        <position position="150"/>
    </location>
</feature>
<feature type="modified residue" description="S-(2-succinyl)cysteine" evidence="2">
    <location>
        <position position="150"/>
    </location>
</feature>
<feature type="modified residue" description="S-nitrosocysteine; in reversibly inhibited form" evidence="2">
    <location>
        <position position="150"/>
    </location>
</feature>
<feature type="modified residue" description="Phosphothreonine" evidence="1">
    <location>
        <position position="151"/>
    </location>
</feature>
<feature type="modified residue" description="Deamidated asparagine" evidence="1">
    <location>
        <position position="153"/>
    </location>
</feature>
<feature type="modified residue" description="Phosphothreonine" evidence="1">
    <location>
        <position position="175"/>
    </location>
</feature>
<feature type="modified residue" description="Phosphothreonine" evidence="1">
    <location>
        <position position="180"/>
    </location>
</feature>
<feature type="modified residue" description="Phosphothreonine" evidence="1">
    <location>
        <position position="182"/>
    </location>
</feature>
<feature type="modified residue" description="N6,N6-dimethyllysine; alternate" evidence="1">
    <location>
        <position position="192"/>
    </location>
</feature>
<feature type="modified residue" description="N6-acetyllysine; alternate" evidence="1">
    <location>
        <position position="192"/>
    </location>
</feature>
<feature type="modified residue" description="N6-malonyllysine; alternate" evidence="1">
    <location>
        <position position="192"/>
    </location>
</feature>
<feature type="modified residue" description="Phosphothreonine" evidence="1">
    <location>
        <position position="209"/>
    </location>
</feature>
<feature type="modified residue" description="N6,N6-dimethyllysine; alternate" evidence="1">
    <location>
        <position position="213"/>
    </location>
</feature>
<feature type="modified residue" description="N6-malonyllysine; alternate" evidence="1">
    <location>
        <position position="213"/>
    </location>
</feature>
<feature type="modified residue" description="N6-acetyllysine" evidence="1">
    <location>
        <position position="217"/>
    </location>
</feature>
<feature type="modified residue" description="Deamidated asparagine" evidence="1">
    <location>
        <position position="223"/>
    </location>
</feature>
<feature type="modified residue" description="N6,N6-dimethyllysine; alternate" evidence="1">
    <location>
        <position position="225"/>
    </location>
</feature>
<feature type="modified residue" description="N6-acetyllysine; alternate" evidence="1">
    <location>
        <position position="225"/>
    </location>
</feature>
<feature type="modified residue" description="Phosphothreonine" evidence="1">
    <location>
        <position position="227"/>
    </location>
</feature>
<feature type="modified residue" description="Phosphothreonine" evidence="1">
    <location>
        <position position="235"/>
    </location>
</feature>
<feature type="modified residue" description="Phosphoserine" evidence="1">
    <location>
        <position position="239"/>
    </location>
</feature>
<feature type="modified residue" description="S-(2-succinyl)cysteine" evidence="2">
    <location>
        <position position="245"/>
    </location>
</feature>
<feature type="modified residue" description="S-nitrosocysteine" evidence="1">
    <location>
        <position position="245"/>
    </location>
</feature>
<feature type="modified residue" description="N6-acetyllysine" evidence="1">
    <location>
        <position position="252"/>
    </location>
</feature>
<feature type="modified residue" description="N6,N6-dimethyllysine" evidence="1">
    <location>
        <position position="258"/>
    </location>
</feature>
<feature type="modified residue" description="N6,N6-dimethyllysine" evidence="1">
    <location>
        <position position="261"/>
    </location>
</feature>
<feature type="modified residue" description="Phosphoserine" evidence="1">
    <location>
        <position position="310"/>
    </location>
</feature>
<feature type="modified residue" description="Deamidated asparagine" evidence="1">
    <location>
        <position position="314"/>
    </location>
</feature>
<feature type="modified residue" description="Phosphoserine" evidence="1">
    <location>
        <position position="331"/>
    </location>
</feature>
<feature type="modified residue" description="N6,N6-dimethyllysine" evidence="1">
    <location>
        <position position="332"/>
    </location>
</feature>
<feature type="cross-link" description="Glycyl lysine isopeptide (Lys-Gly) (interchain with G-Cter in SUMO2)" evidence="1">
    <location>
        <position position="184"/>
    </location>
</feature>
<proteinExistence type="evidence at transcript level"/>
<name>G3P_CANLF</name>
<evidence type="ECO:0000250" key="1">
    <source>
        <dbReference type="UniProtKB" id="P04406"/>
    </source>
</evidence>
<evidence type="ECO:0000250" key="2">
    <source>
        <dbReference type="UniProtKB" id="P04797"/>
    </source>
</evidence>
<evidence type="ECO:0000250" key="3">
    <source>
        <dbReference type="UniProtKB" id="P10096"/>
    </source>
</evidence>
<evidence type="ECO:0000250" key="4">
    <source>
        <dbReference type="UniProtKB" id="P16858"/>
    </source>
</evidence>
<evidence type="ECO:0000250" key="5">
    <source>
        <dbReference type="UniProtKB" id="P22513"/>
    </source>
</evidence>
<evidence type="ECO:0000255" key="6">
    <source>
        <dbReference type="PROSITE-ProRule" id="PRU10009"/>
    </source>
</evidence>
<evidence type="ECO:0000305" key="7"/>
<comment type="function">
    <text evidence="1 2">Has both glyceraldehyde-3-phosphate dehydrogenase and nitrosylase activities, thereby playing a role in glycolysis and nuclear functions, respectively. Glyceraldehyde-3-phosphate dehydrogenase is a key enzyme in glycolysis that catalyzes the first step of the pathway by converting D-glyceraldehyde 3-phosphate (G3P) into 3-phospho-D-glyceroyl phosphate (By similarity). Modulates the organization and assembly of the cytoskeleton. Facilitates the CHP1-dependent microtubule and membrane associations through its ability to stimulate the binding of CHP1 to microtubules (By similarity). Component of the GAIT (gamma interferon-activated inhibitor of translation) complex which mediates interferon-gamma-induced transcript-selective translation inhibition in inflammation processes. Upon interferon-gamma treatment assembles into the GAIT complex which binds to stem loop-containing GAIT elements in the 3'-UTR of diverse inflammatory mRNAs (such as ceruplasmin) and suppresses their translation. Also plays a role in innate immunity by promoting TNF-induced NF-kappa-B activation and type I interferon production, via interaction with TRAF2 and TRAF3, respectively (By similarity). Participates in nuclear events including transcription, RNA transport, DNA replication and apoptosis. Nuclear functions are probably due to the nitrosylase activity that mediates cysteine S-nitrosylation of nuclear target proteins such as SIRT1, HDAC2 and PRKDC (By similarity).</text>
</comment>
<comment type="catalytic activity">
    <reaction evidence="1 6">
        <text>D-glyceraldehyde 3-phosphate + phosphate + NAD(+) = (2R)-3-phospho-glyceroyl phosphate + NADH + H(+)</text>
        <dbReference type="Rhea" id="RHEA:10300"/>
        <dbReference type="ChEBI" id="CHEBI:15378"/>
        <dbReference type="ChEBI" id="CHEBI:43474"/>
        <dbReference type="ChEBI" id="CHEBI:57540"/>
        <dbReference type="ChEBI" id="CHEBI:57604"/>
        <dbReference type="ChEBI" id="CHEBI:57945"/>
        <dbReference type="ChEBI" id="CHEBI:59776"/>
        <dbReference type="EC" id="1.2.1.12"/>
    </reaction>
</comment>
<comment type="catalytic activity">
    <reaction evidence="2">
        <text>S-nitroso-L-cysteinyl-[GAPDH] + L-cysteinyl-[protein] = L-cysteinyl-[GAPDH] + S-nitroso-L-cysteinyl-[protein]</text>
        <dbReference type="Rhea" id="RHEA:66684"/>
        <dbReference type="Rhea" id="RHEA-COMP:10131"/>
        <dbReference type="Rhea" id="RHEA-COMP:17089"/>
        <dbReference type="Rhea" id="RHEA-COMP:17090"/>
        <dbReference type="Rhea" id="RHEA-COMP:17091"/>
        <dbReference type="ChEBI" id="CHEBI:29950"/>
        <dbReference type="ChEBI" id="CHEBI:149494"/>
    </reaction>
    <physiologicalReaction direction="left-to-right" evidence="2">
        <dbReference type="Rhea" id="RHEA:66685"/>
    </physiologicalReaction>
</comment>
<comment type="activity regulation">
    <text evidence="2">Glyceraldehyde-3-phosphate dehydrogenase activity is inhibited by fumarate, via the formation of S-(2-succinyl)cysteine residues.</text>
</comment>
<comment type="pathway">
    <text>Carbohydrate degradation; glycolysis; pyruvate from D-glyceraldehyde 3-phosphate: step 1/5.</text>
</comment>
<comment type="subunit">
    <text evidence="1 2 3">Homotetramer (By similarity). Interacts with TPPP; the interaction is direct (By similarity). Interacts (when S-nitrosylated) with SIAH1; leading to nuclear translocation. Interacts with RILPL1/GOSPEL, leading to prevent the interaction between GAPDH and SIAH1 and prevent nuclear translocation. Interacts with CHP1; the interaction increases the binding of CHP1 with microtubules. Associates with microtubules (By similarity). Interacts with EIF1AD, USP25, PRKCI and WARS1. Interacts with phosphorylated RPL13A; inhibited by oxidatively-modified low-densitity lipoprotein (LDL(ox)). Component of the GAIT complex. Interacts with FKBP6; leading to inhibit GAPDH catalytic activity. Interacts with TRAF2, promoting TRAF2 ubiquitination. Interacts with TRAF3, promoting TRAF3 ubiquitination (By similarity).</text>
</comment>
<comment type="subcellular location">
    <subcellularLocation>
        <location evidence="2">Cytoplasm</location>
        <location evidence="2">Cytosol</location>
    </subcellularLocation>
    <subcellularLocation>
        <location evidence="2">Cytoplasm</location>
        <location evidence="2">Cytoskeleton</location>
    </subcellularLocation>
    <subcellularLocation>
        <location evidence="2">Nucleus</location>
    </subcellularLocation>
    <text evidence="2">Translocates to the nucleus following S-nitrosylation and interaction with SIAH1, which contains a nuclear localization signal. Colocalizes with CHP1 to small punctate structures along the microtubules tracks.</text>
</comment>
<comment type="domain">
    <text evidence="1">The [IL]-x-C-x-x-[DE] motif is a proposed target motif for cysteine S-nitrosylation mediated by the iNOS-S100A8/A9 transnitrosylase complex.</text>
</comment>
<comment type="PTM">
    <text evidence="1">ISGylated.</text>
</comment>
<comment type="PTM">
    <text evidence="1 2">S-nitrosylation of Cys-150 leads to interaction with SIAH1, followed by translocation to the nucleus S-nitrosylation of Cys-245 is induced by interferon-gamma and LDL(ox) implicating the iNOS-S100A8/9 transnitrosylase complex and seems to prevent interaction with phosphorylated RPL13A and to interfere with GAIT complex activity (By similarity).</text>
</comment>
<comment type="PTM">
    <text evidence="4">Sulfhydration at Cys-150 increases catalytic activity.</text>
</comment>
<comment type="PTM">
    <text evidence="1">Oxidative stress can promote the formation of high molecular weight disulfide-linked GAPDH aggregates, through a process called nucleocytoplasmic coagulation.</text>
</comment>
<comment type="similarity">
    <text evidence="7">Belongs to the glyceraldehyde-3-phosphate dehydrogenase family.</text>
</comment>
<gene>
    <name type="primary">GAPDH</name>
    <name type="synonym">GAPD</name>
</gene>
<reference key="1">
    <citation type="submission" date="2000-02" db="EMBL/GenBank/DDBJ databases">
        <title>Canine glyceraldehyde-3-phosphate dehydrogenase (GAPDH), complete CDS.</title>
        <authorList>
            <person name="Kitamura H."/>
            <person name="Adachi K."/>
            <person name="Kido N."/>
            <person name="Hagiya T."/>
            <person name="Minase K."/>
            <person name="Yasui H."/>
            <person name="Yano E."/>
            <person name="Ohta Y."/>
            <person name="Tabu K."/>
            <person name="Mae J."/>
            <person name="Kanehira K."/>
            <person name="Ohashi A."/>
        </authorList>
    </citation>
    <scope>NUCLEOTIDE SEQUENCE [MRNA]</scope>
    <source>
        <tissue>Adrenal gland</tissue>
    </source>
</reference>
<reference key="2">
    <citation type="journal article" date="1996" name="Am. J. Vet. Res.">
        <title>Canine glyceraldehyde-3-phosphate dehydrogenase complementary DNA: polymerase chain reaction amplification, cloning, partial sequence analysis, and use as loading control in ribonuclease protection assays.</title>
        <authorList>
            <person name="Groene A."/>
            <person name="Weckmann M.T."/>
            <person name="Capen C.C."/>
            <person name="Rosol T.J."/>
        </authorList>
    </citation>
    <scope>NUCLEOTIDE SEQUENCE [MRNA] OF 121-183</scope>
</reference>